<proteinExistence type="inferred from homology"/>
<reference key="1">
    <citation type="journal article" date="2006" name="PLoS Genet.">
        <title>Genome sequence of Rickettsia bellii illuminates the role of amoebae in gene exchanges between intracellular pathogens.</title>
        <authorList>
            <person name="Ogata H."/>
            <person name="La Scola B."/>
            <person name="Audic S."/>
            <person name="Renesto P."/>
            <person name="Blanc G."/>
            <person name="Robert C."/>
            <person name="Fournier P.-E."/>
            <person name="Claverie J.-M."/>
            <person name="Raoult D."/>
        </authorList>
    </citation>
    <scope>NUCLEOTIDE SEQUENCE [LARGE SCALE GENOMIC DNA]</scope>
    <source>
        <strain>RML369-C</strain>
    </source>
</reference>
<organism>
    <name type="scientific">Rickettsia bellii (strain RML369-C)</name>
    <dbReference type="NCBI Taxonomy" id="336407"/>
    <lineage>
        <taxon>Bacteria</taxon>
        <taxon>Pseudomonadati</taxon>
        <taxon>Pseudomonadota</taxon>
        <taxon>Alphaproteobacteria</taxon>
        <taxon>Rickettsiales</taxon>
        <taxon>Rickettsiaceae</taxon>
        <taxon>Rickettsieae</taxon>
        <taxon>Rickettsia</taxon>
        <taxon>belli group</taxon>
    </lineage>
</organism>
<dbReference type="EC" id="6.3.4.20" evidence="1"/>
<dbReference type="EMBL" id="CP000087">
    <property type="protein sequence ID" value="ABE04577.1"/>
    <property type="molecule type" value="Genomic_DNA"/>
</dbReference>
<dbReference type="RefSeq" id="WP_011477168.1">
    <property type="nucleotide sequence ID" value="NC_007940.1"/>
</dbReference>
<dbReference type="SMR" id="Q1RJ87"/>
<dbReference type="KEGG" id="rbe:RBE_0496"/>
<dbReference type="eggNOG" id="COG0603">
    <property type="taxonomic scope" value="Bacteria"/>
</dbReference>
<dbReference type="HOGENOM" id="CLU_081854_1_1_5"/>
<dbReference type="OrthoDB" id="9789567at2"/>
<dbReference type="UniPathway" id="UPA00391"/>
<dbReference type="Proteomes" id="UP000001951">
    <property type="component" value="Chromosome"/>
</dbReference>
<dbReference type="GO" id="GO:0005524">
    <property type="term" value="F:ATP binding"/>
    <property type="evidence" value="ECO:0007669"/>
    <property type="project" value="UniProtKB-UniRule"/>
</dbReference>
<dbReference type="GO" id="GO:0016879">
    <property type="term" value="F:ligase activity, forming carbon-nitrogen bonds"/>
    <property type="evidence" value="ECO:0007669"/>
    <property type="project" value="UniProtKB-UniRule"/>
</dbReference>
<dbReference type="GO" id="GO:0008270">
    <property type="term" value="F:zinc ion binding"/>
    <property type="evidence" value="ECO:0007669"/>
    <property type="project" value="UniProtKB-UniRule"/>
</dbReference>
<dbReference type="GO" id="GO:0008616">
    <property type="term" value="P:queuosine biosynthetic process"/>
    <property type="evidence" value="ECO:0007669"/>
    <property type="project" value="UniProtKB-UniRule"/>
</dbReference>
<dbReference type="CDD" id="cd01995">
    <property type="entry name" value="QueC-like"/>
    <property type="match status" value="1"/>
</dbReference>
<dbReference type="Gene3D" id="3.40.50.620">
    <property type="entry name" value="HUPs"/>
    <property type="match status" value="1"/>
</dbReference>
<dbReference type="HAMAP" id="MF_01633">
    <property type="entry name" value="QueC"/>
    <property type="match status" value="1"/>
</dbReference>
<dbReference type="InterPro" id="IPR018317">
    <property type="entry name" value="QueC"/>
</dbReference>
<dbReference type="InterPro" id="IPR014729">
    <property type="entry name" value="Rossmann-like_a/b/a_fold"/>
</dbReference>
<dbReference type="NCBIfam" id="TIGR00364">
    <property type="entry name" value="7-cyano-7-deazaguanine synthase QueC"/>
    <property type="match status" value="1"/>
</dbReference>
<dbReference type="PANTHER" id="PTHR42914">
    <property type="entry name" value="7-CYANO-7-DEAZAGUANINE SYNTHASE"/>
    <property type="match status" value="1"/>
</dbReference>
<dbReference type="PANTHER" id="PTHR42914:SF1">
    <property type="entry name" value="7-CYANO-7-DEAZAGUANINE SYNTHASE"/>
    <property type="match status" value="1"/>
</dbReference>
<dbReference type="Pfam" id="PF06508">
    <property type="entry name" value="QueC"/>
    <property type="match status" value="1"/>
</dbReference>
<dbReference type="PIRSF" id="PIRSF006293">
    <property type="entry name" value="ExsB"/>
    <property type="match status" value="1"/>
</dbReference>
<dbReference type="SUPFAM" id="SSF52402">
    <property type="entry name" value="Adenine nucleotide alpha hydrolases-like"/>
    <property type="match status" value="1"/>
</dbReference>
<evidence type="ECO:0000255" key="1">
    <source>
        <dbReference type="HAMAP-Rule" id="MF_01633"/>
    </source>
</evidence>
<accession>Q1RJ87</accession>
<protein>
    <recommendedName>
        <fullName evidence="1">7-cyano-7-deazaguanine synthase</fullName>
        <ecNumber evidence="1">6.3.4.20</ecNumber>
    </recommendedName>
    <alternativeName>
        <fullName evidence="1">7-cyano-7-carbaguanine synthase</fullName>
    </alternativeName>
    <alternativeName>
        <fullName evidence="1">PreQ(0) synthase</fullName>
    </alternativeName>
    <alternativeName>
        <fullName evidence="1">Queuosine biosynthesis protein QueC</fullName>
    </alternativeName>
</protein>
<comment type="function">
    <text evidence="1">Catalyzes the ATP-dependent conversion of 7-carboxy-7-deazaguanine (CDG) to 7-cyano-7-deazaguanine (preQ(0)).</text>
</comment>
<comment type="catalytic activity">
    <reaction evidence="1">
        <text>7-carboxy-7-deazaguanine + NH4(+) + ATP = 7-cyano-7-deazaguanine + ADP + phosphate + H2O + H(+)</text>
        <dbReference type="Rhea" id="RHEA:27982"/>
        <dbReference type="ChEBI" id="CHEBI:15377"/>
        <dbReference type="ChEBI" id="CHEBI:15378"/>
        <dbReference type="ChEBI" id="CHEBI:28938"/>
        <dbReference type="ChEBI" id="CHEBI:30616"/>
        <dbReference type="ChEBI" id="CHEBI:43474"/>
        <dbReference type="ChEBI" id="CHEBI:45075"/>
        <dbReference type="ChEBI" id="CHEBI:61036"/>
        <dbReference type="ChEBI" id="CHEBI:456216"/>
        <dbReference type="EC" id="6.3.4.20"/>
    </reaction>
</comment>
<comment type="cofactor">
    <cofactor evidence="1">
        <name>Zn(2+)</name>
        <dbReference type="ChEBI" id="CHEBI:29105"/>
    </cofactor>
    <text evidence="1">Binds 1 zinc ion per subunit.</text>
</comment>
<comment type="pathway">
    <text evidence="1">Purine metabolism; 7-cyano-7-deazaguanine biosynthesis.</text>
</comment>
<comment type="similarity">
    <text evidence="1">Belongs to the QueC family.</text>
</comment>
<keyword id="KW-0067">ATP-binding</keyword>
<keyword id="KW-0436">Ligase</keyword>
<keyword id="KW-0479">Metal-binding</keyword>
<keyword id="KW-0547">Nucleotide-binding</keyword>
<keyword id="KW-0671">Queuosine biosynthesis</keyword>
<keyword id="KW-0862">Zinc</keyword>
<name>QUEC_RICBR</name>
<feature type="chain" id="PRO_0000246911" description="7-cyano-7-deazaguanine synthase">
    <location>
        <begin position="1"/>
        <end position="225"/>
    </location>
</feature>
<feature type="binding site" evidence="1">
    <location>
        <begin position="8"/>
        <end position="18"/>
    </location>
    <ligand>
        <name>ATP</name>
        <dbReference type="ChEBI" id="CHEBI:30616"/>
    </ligand>
</feature>
<feature type="binding site" evidence="1">
    <location>
        <position position="188"/>
    </location>
    <ligand>
        <name>Zn(2+)</name>
        <dbReference type="ChEBI" id="CHEBI:29105"/>
    </ligand>
</feature>
<feature type="binding site" evidence="1">
    <location>
        <position position="198"/>
    </location>
    <ligand>
        <name>Zn(2+)</name>
        <dbReference type="ChEBI" id="CHEBI:29105"/>
    </ligand>
</feature>
<feature type="binding site" evidence="1">
    <location>
        <position position="201"/>
    </location>
    <ligand>
        <name>Zn(2+)</name>
        <dbReference type="ChEBI" id="CHEBI:29105"/>
    </ligand>
</feature>
<feature type="binding site" evidence="1">
    <location>
        <position position="204"/>
    </location>
    <ligand>
        <name>Zn(2+)</name>
        <dbReference type="ChEBI" id="CHEBI:29105"/>
    </ligand>
</feature>
<sequence>MKKAVILVSGGADSATVLAIMREQGYEIHAISFNYGQRNNAELRKVTELVKEYNVKQHKIVNIDLRAFGGSALTDDDIKVPHYHDTKELPEDVPVTYVPARNTIFLSYALGFAEIIGAKDIFIGVHTSDSANYPDCRPEYIKSFEAMANLATNIGGVTIHTPLINMTKDQIIKTGLRLGVDYKNTISCYDPSEDDLSCGTCLACTIRLDAFKKNNVQDPINYILF</sequence>
<gene>
    <name evidence="1" type="primary">queC</name>
    <name type="ordered locus">RBE_0496</name>
</gene>